<dbReference type="EMBL" id="AL123456">
    <property type="protein sequence ID" value="CCP43089.1"/>
    <property type="molecule type" value="Genomic_DNA"/>
</dbReference>
<dbReference type="RefSeq" id="NP_214873.1">
    <property type="nucleotide sequence ID" value="NC_000962.3"/>
</dbReference>
<dbReference type="RefSeq" id="WP_003898413.1">
    <property type="nucleotide sequence ID" value="NZ_NVQJ01000002.1"/>
</dbReference>
<dbReference type="STRING" id="83332.Rv0359"/>
<dbReference type="PaxDb" id="83332-Rv0359"/>
<dbReference type="DNASU" id="886482"/>
<dbReference type="GeneID" id="886482"/>
<dbReference type="KEGG" id="mtu:Rv0359"/>
<dbReference type="KEGG" id="mtv:RVBD_0359"/>
<dbReference type="TubercuList" id="Rv0359"/>
<dbReference type="eggNOG" id="COG1994">
    <property type="taxonomic scope" value="Bacteria"/>
</dbReference>
<dbReference type="InParanoid" id="L0T550"/>
<dbReference type="OrthoDB" id="9800627at2"/>
<dbReference type="PhylomeDB" id="L0T550"/>
<dbReference type="Proteomes" id="UP000001584">
    <property type="component" value="Chromosome"/>
</dbReference>
<dbReference type="GO" id="GO:0005886">
    <property type="term" value="C:plasma membrane"/>
    <property type="evidence" value="ECO:0007669"/>
    <property type="project" value="UniProtKB-SubCell"/>
</dbReference>
<dbReference type="GO" id="GO:0046872">
    <property type="term" value="F:metal ion binding"/>
    <property type="evidence" value="ECO:0007669"/>
    <property type="project" value="UniProtKB-KW"/>
</dbReference>
<dbReference type="GO" id="GO:0008237">
    <property type="term" value="F:metallopeptidase activity"/>
    <property type="evidence" value="ECO:0007669"/>
    <property type="project" value="UniProtKB-KW"/>
</dbReference>
<dbReference type="GO" id="GO:0006508">
    <property type="term" value="P:proteolysis"/>
    <property type="evidence" value="ECO:0007669"/>
    <property type="project" value="UniProtKB-KW"/>
</dbReference>
<dbReference type="CDD" id="cd06158">
    <property type="entry name" value="S2P-M50_like_1"/>
    <property type="match status" value="1"/>
</dbReference>
<dbReference type="InterPro" id="IPR052348">
    <property type="entry name" value="Metallopeptidase_M50B"/>
</dbReference>
<dbReference type="InterPro" id="IPR044537">
    <property type="entry name" value="S2P-M50-like"/>
</dbReference>
<dbReference type="PANTHER" id="PTHR35864">
    <property type="entry name" value="ZINC METALLOPROTEASE MJ0611-RELATED"/>
    <property type="match status" value="1"/>
</dbReference>
<dbReference type="PANTHER" id="PTHR35864:SF1">
    <property type="entry name" value="ZINC METALLOPROTEASE YWHC-RELATED"/>
    <property type="match status" value="1"/>
</dbReference>
<reference key="1">
    <citation type="journal article" date="1998" name="Nature">
        <title>Deciphering the biology of Mycobacterium tuberculosis from the complete genome sequence.</title>
        <authorList>
            <person name="Cole S.T."/>
            <person name="Brosch R."/>
            <person name="Parkhill J."/>
            <person name="Garnier T."/>
            <person name="Churcher C.M."/>
            <person name="Harris D.E."/>
            <person name="Gordon S.V."/>
            <person name="Eiglmeier K."/>
            <person name="Gas S."/>
            <person name="Barry C.E. III"/>
            <person name="Tekaia F."/>
            <person name="Badcock K."/>
            <person name="Basham D."/>
            <person name="Brown D."/>
            <person name="Chillingworth T."/>
            <person name="Connor R."/>
            <person name="Davies R.M."/>
            <person name="Devlin K."/>
            <person name="Feltwell T."/>
            <person name="Gentles S."/>
            <person name="Hamlin N."/>
            <person name="Holroyd S."/>
            <person name="Hornsby T."/>
            <person name="Jagels K."/>
            <person name="Krogh A."/>
            <person name="McLean J."/>
            <person name="Moule S."/>
            <person name="Murphy L.D."/>
            <person name="Oliver S."/>
            <person name="Osborne J."/>
            <person name="Quail M.A."/>
            <person name="Rajandream M.A."/>
            <person name="Rogers J."/>
            <person name="Rutter S."/>
            <person name="Seeger K."/>
            <person name="Skelton S."/>
            <person name="Squares S."/>
            <person name="Squares R."/>
            <person name="Sulston J.E."/>
            <person name="Taylor K."/>
            <person name="Whitehead S."/>
            <person name="Barrell B.G."/>
        </authorList>
    </citation>
    <scope>NUCLEOTIDE SEQUENCE [LARGE SCALE GENOMIC DNA]</scope>
    <source>
        <strain>ATCC 25618 / H37Rv</strain>
    </source>
</reference>
<reference key="2">
    <citation type="journal article" date="2011" name="Mol. Cell. Proteomics">
        <title>Proteogenomic analysis of Mycobacterium tuberculosis by high resolution mass spectrometry.</title>
        <authorList>
            <person name="Kelkar D.S."/>
            <person name="Kumar D."/>
            <person name="Kumar P."/>
            <person name="Balakrishnan L."/>
            <person name="Muthusamy B."/>
            <person name="Yadav A.K."/>
            <person name="Shrivastava P."/>
            <person name="Marimuthu A."/>
            <person name="Anand S."/>
            <person name="Sundaram H."/>
            <person name="Kingsbury R."/>
            <person name="Harsha H.C."/>
            <person name="Nair B."/>
            <person name="Prasad T.S."/>
            <person name="Chauhan D.S."/>
            <person name="Katoch K."/>
            <person name="Katoch V.M."/>
            <person name="Kumar P."/>
            <person name="Chaerkady R."/>
            <person name="Ramachandran S."/>
            <person name="Dash D."/>
            <person name="Pandey A."/>
        </authorList>
    </citation>
    <scope>IDENTIFICATION BY MASS SPECTROMETRY [LARGE SCALE ANALYSIS]</scope>
    <source>
        <strain>ATCC 25618 / H37Rv</strain>
    </source>
</reference>
<proteinExistence type="evidence at protein level"/>
<accession>L0T550</accession>
<comment type="cofactor">
    <cofactor evidence="1">
        <name>Zn(2+)</name>
        <dbReference type="ChEBI" id="CHEBI:29105"/>
    </cofactor>
    <text evidence="1">Binds 1 zinc ion per subunit.</text>
</comment>
<comment type="subcellular location">
    <subcellularLocation>
        <location evidence="3">Cell membrane</location>
        <topology evidence="3">Multi-pass membrane protein</topology>
    </subcellularLocation>
</comment>
<comment type="similarity">
    <text evidence="3">Belongs to the peptidase M50B family.</text>
</comment>
<evidence type="ECO:0000250" key="1"/>
<evidence type="ECO:0000255" key="2"/>
<evidence type="ECO:0000305" key="3"/>
<organism>
    <name type="scientific">Mycobacterium tuberculosis (strain ATCC 25618 / H37Rv)</name>
    <dbReference type="NCBI Taxonomy" id="83332"/>
    <lineage>
        <taxon>Bacteria</taxon>
        <taxon>Bacillati</taxon>
        <taxon>Actinomycetota</taxon>
        <taxon>Actinomycetes</taxon>
        <taxon>Mycobacteriales</taxon>
        <taxon>Mycobacteriaceae</taxon>
        <taxon>Mycobacterium</taxon>
        <taxon>Mycobacterium tuberculosis complex</taxon>
    </lineage>
</organism>
<protein>
    <recommendedName>
        <fullName>Putative zinc metalloprotease Rip2</fullName>
    </recommendedName>
</protein>
<feature type="chain" id="PRO_0000422678" description="Putative zinc metalloprotease Rip2">
    <location>
        <begin position="1"/>
        <end position="259"/>
    </location>
</feature>
<feature type="transmembrane region" description="Helical" evidence="2">
    <location>
        <begin position="14"/>
        <end position="34"/>
    </location>
</feature>
<feature type="transmembrane region" description="Helical" evidence="2">
    <location>
        <begin position="39"/>
        <end position="59"/>
    </location>
</feature>
<feature type="transmembrane region" description="Helical" evidence="2">
    <location>
        <begin position="97"/>
        <end position="117"/>
    </location>
</feature>
<feature type="transmembrane region" description="Helical" evidence="2">
    <location>
        <begin position="128"/>
        <end position="148"/>
    </location>
</feature>
<feature type="transmembrane region" description="Helical" evidence="2">
    <location>
        <begin position="156"/>
        <end position="176"/>
    </location>
</feature>
<feature type="transmembrane region" description="Helical" evidence="2">
    <location>
        <begin position="211"/>
        <end position="231"/>
    </location>
</feature>
<feature type="active site" evidence="1">
    <location>
        <position position="61"/>
    </location>
</feature>
<feature type="binding site" evidence="1">
    <location>
        <position position="60"/>
    </location>
    <ligand>
        <name>Zn(2+)</name>
        <dbReference type="ChEBI" id="CHEBI:29105"/>
        <note>catalytic</note>
    </ligand>
</feature>
<feature type="binding site" evidence="1">
    <location>
        <position position="64"/>
    </location>
    <ligand>
        <name>Zn(2+)</name>
        <dbReference type="ChEBI" id="CHEBI:29105"/>
        <note>catalytic</note>
    </ligand>
</feature>
<sequence>MSETGQRESVRPSPIFLGLLGLTAVGGALAWLAGETVQPLAYAGVFVMVIAGWLVSLCLHEFGHAFTAWRFGDHDVAVRGYLTLDPRRYSHPMLSLGLPMLFIALGGIGLPGAAVYVHTWFMTTARRTLVSLAGPTVNLALAMLLLAATRLLFDPIHAVLWAGVAFLAFLQLTALVLNLLPIPGLDGYAALEPHLRPETQRALAPAKQFALVFLLVLFLAPTLNGWFFGVVYWLFDLSGVSHRLAAAGSVLARFWSIWF</sequence>
<gene>
    <name type="primary">rip2</name>
    <name type="ordered locus">Rv0359</name>
</gene>
<name>RIP2_MYCTU</name>
<keyword id="KW-1003">Cell membrane</keyword>
<keyword id="KW-0378">Hydrolase</keyword>
<keyword id="KW-0472">Membrane</keyword>
<keyword id="KW-0479">Metal-binding</keyword>
<keyword id="KW-0482">Metalloprotease</keyword>
<keyword id="KW-0645">Protease</keyword>
<keyword id="KW-1185">Reference proteome</keyword>
<keyword id="KW-0812">Transmembrane</keyword>
<keyword id="KW-1133">Transmembrane helix</keyword>
<keyword id="KW-0862">Zinc</keyword>